<dbReference type="EMBL" id="AC016795">
    <property type="protein sequence ID" value="AAF23203.1"/>
    <property type="molecule type" value="Genomic_DNA"/>
</dbReference>
<dbReference type="EMBL" id="CP002686">
    <property type="protein sequence ID" value="AEE75111.1"/>
    <property type="molecule type" value="Genomic_DNA"/>
</dbReference>
<dbReference type="RefSeq" id="NP_187793.1">
    <property type="nucleotide sequence ID" value="NM_112020.1"/>
</dbReference>
<dbReference type="SMR" id="Q9SF12"/>
<dbReference type="FunCoup" id="Q9SF12">
    <property type="interactions" value="40"/>
</dbReference>
<dbReference type="STRING" id="3702.Q9SF12"/>
<dbReference type="PaxDb" id="3702-AT3G11870.1"/>
<dbReference type="EnsemblPlants" id="AT3G11870.1">
    <property type="protein sequence ID" value="AT3G11870.1"/>
    <property type="gene ID" value="AT3G11870"/>
</dbReference>
<dbReference type="GeneID" id="820360"/>
<dbReference type="Gramene" id="AT3G11870.1">
    <property type="protein sequence ID" value="AT3G11870.1"/>
    <property type="gene ID" value="AT3G11870"/>
</dbReference>
<dbReference type="KEGG" id="ath:AT3G11870"/>
<dbReference type="Araport" id="AT3G11870"/>
<dbReference type="TAIR" id="AT3G11870">
    <property type="gene designation" value="IRE1C"/>
</dbReference>
<dbReference type="eggNOG" id="KOG1027">
    <property type="taxonomic scope" value="Eukaryota"/>
</dbReference>
<dbReference type="HOGENOM" id="CLU_004875_3_2_1"/>
<dbReference type="InParanoid" id="Q9SF12"/>
<dbReference type="OMA" id="MEIYAFI"/>
<dbReference type="PhylomeDB" id="Q9SF12"/>
<dbReference type="PRO" id="PR:Q9SF12"/>
<dbReference type="Proteomes" id="UP000006548">
    <property type="component" value="Chromosome 3"/>
</dbReference>
<dbReference type="ExpressionAtlas" id="Q9SF12">
    <property type="expression patterns" value="baseline and differential"/>
</dbReference>
<dbReference type="GO" id="GO:0005783">
    <property type="term" value="C:endoplasmic reticulum"/>
    <property type="evidence" value="ECO:0000314"/>
    <property type="project" value="TAIR"/>
</dbReference>
<dbReference type="GO" id="GO:0005524">
    <property type="term" value="F:ATP binding"/>
    <property type="evidence" value="ECO:0007669"/>
    <property type="project" value="UniProtKB-KW"/>
</dbReference>
<dbReference type="GO" id="GO:0004674">
    <property type="term" value="F:protein serine/threonine kinase activity"/>
    <property type="evidence" value="ECO:0007669"/>
    <property type="project" value="InterPro"/>
</dbReference>
<dbReference type="GO" id="GO:0004521">
    <property type="term" value="F:RNA endonuclease activity"/>
    <property type="evidence" value="ECO:0007669"/>
    <property type="project" value="InterPro"/>
</dbReference>
<dbReference type="GO" id="GO:0030968">
    <property type="term" value="P:endoplasmic reticulum unfolded protein response"/>
    <property type="evidence" value="ECO:0007669"/>
    <property type="project" value="InterPro"/>
</dbReference>
<dbReference type="GO" id="GO:0006397">
    <property type="term" value="P:mRNA processing"/>
    <property type="evidence" value="ECO:0007669"/>
    <property type="project" value="InterPro"/>
</dbReference>
<dbReference type="Gene3D" id="1.20.1440.180">
    <property type="entry name" value="KEN domain"/>
    <property type="match status" value="1"/>
</dbReference>
<dbReference type="Gene3D" id="3.30.200.20">
    <property type="entry name" value="Phosphorylase Kinase, domain 1"/>
    <property type="match status" value="1"/>
</dbReference>
<dbReference type="Gene3D" id="1.10.510.10">
    <property type="entry name" value="Transferase(Phosphotransferase) domain 1"/>
    <property type="match status" value="1"/>
</dbReference>
<dbReference type="InterPro" id="IPR045133">
    <property type="entry name" value="IRE1/2-like"/>
</dbReference>
<dbReference type="InterPro" id="IPR010513">
    <property type="entry name" value="KEN_dom"/>
</dbReference>
<dbReference type="InterPro" id="IPR038357">
    <property type="entry name" value="KEN_sf"/>
</dbReference>
<dbReference type="InterPro" id="IPR011009">
    <property type="entry name" value="Kinase-like_dom_sf"/>
</dbReference>
<dbReference type="InterPro" id="IPR000719">
    <property type="entry name" value="Prot_kinase_dom"/>
</dbReference>
<dbReference type="PANTHER" id="PTHR13954">
    <property type="entry name" value="IRE1-RELATED"/>
    <property type="match status" value="1"/>
</dbReference>
<dbReference type="PANTHER" id="PTHR13954:SF6">
    <property type="entry name" value="NON-SPECIFIC SERINE_THREONINE PROTEIN KINASE"/>
    <property type="match status" value="1"/>
</dbReference>
<dbReference type="Pfam" id="PF00069">
    <property type="entry name" value="Pkinase"/>
    <property type="match status" value="1"/>
</dbReference>
<dbReference type="Pfam" id="PF06479">
    <property type="entry name" value="Ribonuc_2-5A"/>
    <property type="match status" value="1"/>
</dbReference>
<dbReference type="SMART" id="SM00580">
    <property type="entry name" value="PUG"/>
    <property type="match status" value="1"/>
</dbReference>
<dbReference type="SUPFAM" id="SSF56112">
    <property type="entry name" value="Protein kinase-like (PK-like)"/>
    <property type="match status" value="1"/>
</dbReference>
<dbReference type="PROSITE" id="PS51392">
    <property type="entry name" value="KEN"/>
    <property type="match status" value="1"/>
</dbReference>
<dbReference type="PROSITE" id="PS50011">
    <property type="entry name" value="PROTEIN_KINASE_DOM"/>
    <property type="match status" value="1"/>
</dbReference>
<gene>
    <name type="ordered locus">At3g11870</name>
    <name type="ORF">F26K24.16</name>
</gene>
<reference key="1">
    <citation type="journal article" date="2000" name="Nature">
        <title>Sequence and analysis of chromosome 3 of the plant Arabidopsis thaliana.</title>
        <authorList>
            <person name="Salanoubat M."/>
            <person name="Lemcke K."/>
            <person name="Rieger M."/>
            <person name="Ansorge W."/>
            <person name="Unseld M."/>
            <person name="Fartmann B."/>
            <person name="Valle G."/>
            <person name="Bloecker H."/>
            <person name="Perez-Alonso M."/>
            <person name="Obermaier B."/>
            <person name="Delseny M."/>
            <person name="Boutry M."/>
            <person name="Grivell L.A."/>
            <person name="Mache R."/>
            <person name="Puigdomenech P."/>
            <person name="De Simone V."/>
            <person name="Choisne N."/>
            <person name="Artiguenave F."/>
            <person name="Robert C."/>
            <person name="Brottier P."/>
            <person name="Wincker P."/>
            <person name="Cattolico L."/>
            <person name="Weissenbach J."/>
            <person name="Saurin W."/>
            <person name="Quetier F."/>
            <person name="Schaefer M."/>
            <person name="Mueller-Auer S."/>
            <person name="Gabel C."/>
            <person name="Fuchs M."/>
            <person name="Benes V."/>
            <person name="Wurmbach E."/>
            <person name="Drzonek H."/>
            <person name="Erfle H."/>
            <person name="Jordan N."/>
            <person name="Bangert S."/>
            <person name="Wiedelmann R."/>
            <person name="Kranz H."/>
            <person name="Voss H."/>
            <person name="Holland R."/>
            <person name="Brandt P."/>
            <person name="Nyakatura G."/>
            <person name="Vezzi A."/>
            <person name="D'Angelo M."/>
            <person name="Pallavicini A."/>
            <person name="Toppo S."/>
            <person name="Simionati B."/>
            <person name="Conrad A."/>
            <person name="Hornischer K."/>
            <person name="Kauer G."/>
            <person name="Loehnert T.-H."/>
            <person name="Nordsiek G."/>
            <person name="Reichelt J."/>
            <person name="Scharfe M."/>
            <person name="Schoen O."/>
            <person name="Bargues M."/>
            <person name="Terol J."/>
            <person name="Climent J."/>
            <person name="Navarro P."/>
            <person name="Collado C."/>
            <person name="Perez-Perez A."/>
            <person name="Ottenwaelder B."/>
            <person name="Duchemin D."/>
            <person name="Cooke R."/>
            <person name="Laudie M."/>
            <person name="Berger-Llauro C."/>
            <person name="Purnelle B."/>
            <person name="Masuy D."/>
            <person name="de Haan M."/>
            <person name="Maarse A.C."/>
            <person name="Alcaraz J.-P."/>
            <person name="Cottet A."/>
            <person name="Casacuberta E."/>
            <person name="Monfort A."/>
            <person name="Argiriou A."/>
            <person name="Flores M."/>
            <person name="Liguori R."/>
            <person name="Vitale D."/>
            <person name="Mannhaupt G."/>
            <person name="Haase D."/>
            <person name="Schoof H."/>
            <person name="Rudd S."/>
            <person name="Zaccaria P."/>
            <person name="Mewes H.-W."/>
            <person name="Mayer K.F.X."/>
            <person name="Kaul S."/>
            <person name="Town C.D."/>
            <person name="Koo H.L."/>
            <person name="Tallon L.J."/>
            <person name="Jenkins J."/>
            <person name="Rooney T."/>
            <person name="Rizzo M."/>
            <person name="Walts A."/>
            <person name="Utterback T."/>
            <person name="Fujii C.Y."/>
            <person name="Shea T.P."/>
            <person name="Creasy T.H."/>
            <person name="Haas B."/>
            <person name="Maiti R."/>
            <person name="Wu D."/>
            <person name="Peterson J."/>
            <person name="Van Aken S."/>
            <person name="Pai G."/>
            <person name="Militscher J."/>
            <person name="Sellers P."/>
            <person name="Gill J.E."/>
            <person name="Feldblyum T.V."/>
            <person name="Preuss D."/>
            <person name="Lin X."/>
            <person name="Nierman W.C."/>
            <person name="Salzberg S.L."/>
            <person name="White O."/>
            <person name="Venter J.C."/>
            <person name="Fraser C.M."/>
            <person name="Kaneko T."/>
            <person name="Nakamura Y."/>
            <person name="Sato S."/>
            <person name="Kato T."/>
            <person name="Asamizu E."/>
            <person name="Sasamoto S."/>
            <person name="Kimura T."/>
            <person name="Idesawa K."/>
            <person name="Kawashima K."/>
            <person name="Kishida Y."/>
            <person name="Kiyokawa C."/>
            <person name="Kohara M."/>
            <person name="Matsumoto M."/>
            <person name="Matsuno A."/>
            <person name="Muraki A."/>
            <person name="Nakayama S."/>
            <person name="Nakazaki N."/>
            <person name="Shinpo S."/>
            <person name="Takeuchi C."/>
            <person name="Wada T."/>
            <person name="Watanabe A."/>
            <person name="Yamada M."/>
            <person name="Yasuda M."/>
            <person name="Tabata S."/>
        </authorList>
    </citation>
    <scope>NUCLEOTIDE SEQUENCE [LARGE SCALE GENOMIC DNA]</scope>
    <source>
        <strain>cv. Columbia</strain>
    </source>
</reference>
<reference key="2">
    <citation type="journal article" date="2017" name="Plant J.">
        <title>Araport11: a complete reannotation of the Arabidopsis thaliana reference genome.</title>
        <authorList>
            <person name="Cheng C.Y."/>
            <person name="Krishnakumar V."/>
            <person name="Chan A.P."/>
            <person name="Thibaud-Nissen F."/>
            <person name="Schobel S."/>
            <person name="Town C.D."/>
        </authorList>
    </citation>
    <scope>GENOME REANNOTATION</scope>
    <source>
        <strain>cv. Columbia</strain>
    </source>
</reference>
<reference key="3">
    <citation type="journal article" date="2003" name="Plant Physiol.">
        <title>Expansion of the receptor-like kinase/Pelle gene family and receptor-like proteins in Arabidopsis.</title>
        <authorList>
            <person name="Shiu S.H."/>
            <person name="Bleecker A.B."/>
        </authorList>
    </citation>
    <scope>GENE FAMILY</scope>
</reference>
<evidence type="ECO:0000255" key="1"/>
<evidence type="ECO:0000255" key="2">
    <source>
        <dbReference type="PROSITE-ProRule" id="PRU00159"/>
    </source>
</evidence>
<evidence type="ECO:0000255" key="3">
    <source>
        <dbReference type="PROSITE-ProRule" id="PRU00725"/>
    </source>
</evidence>
<evidence type="ECO:0000256" key="4">
    <source>
        <dbReference type="SAM" id="MobiDB-lite"/>
    </source>
</evidence>
<sequence length="554" mass="63260">MWLLAISLVGLLVVVVCVFLRFSKDKGLDGIVNEKKRDKNSAPRVSASGEDGTKNEQVEKKSDPSGGLGEENEKTNSESKVLSVPSDQNINKTLPVMLPSLELRKYDENETPGKVVNRRLLVSTNEMKYGRNGYEVFQGVYGRRSSVAVKCLDLAHTTEAFIQNEIDNHCLCDDHSNIIRFHGLEQDQSFAYICLEPWKCSLDDLIKLSVRRTKRDTQAVAPVDDLEKVMKRIKFWKEKGKPLPLTPMLKLMRDVVCGLAHLHKLKTIHRNLNPQNVLIIVKDMTLTAKISDMSLSKHLGGKKSSYKHLATCSGSSGWQAPEQLNKDKKKKEDFPADMFNFGCLLHYAVMGTHPFGSPSERDTNIKTNNKTNLSLVTNLEAINLIEQLLNYKPDLRPSATQVLLHPLFWDSEKRLFFLREASDRIELDITMWGDLNKTIAPRVLGESKDWASKLGKTFITHIENLAQAQPGQESRQYNRSYKYWSLRHLLRLIRNILSHHREILDDPKIKEMVGKVPEGLDIFFTARFPNLMMEIYAFISMHCKGEEAFEKYFN</sequence>
<organism>
    <name type="scientific">Arabidopsis thaliana</name>
    <name type="common">Mouse-ear cress</name>
    <dbReference type="NCBI Taxonomy" id="3702"/>
    <lineage>
        <taxon>Eukaryota</taxon>
        <taxon>Viridiplantae</taxon>
        <taxon>Streptophyta</taxon>
        <taxon>Embryophyta</taxon>
        <taxon>Tracheophyta</taxon>
        <taxon>Spermatophyta</taxon>
        <taxon>Magnoliopsida</taxon>
        <taxon>eudicotyledons</taxon>
        <taxon>Gunneridae</taxon>
        <taxon>Pentapetalae</taxon>
        <taxon>rosids</taxon>
        <taxon>malvids</taxon>
        <taxon>Brassicales</taxon>
        <taxon>Brassicaceae</taxon>
        <taxon>Camelineae</taxon>
        <taxon>Arabidopsis</taxon>
    </lineage>
</organism>
<proteinExistence type="inferred from homology"/>
<protein>
    <recommendedName>
        <fullName>Inactive serine/threonine-protein kinase/endoribonuclease IRE1-like</fullName>
    </recommendedName>
    <alternativeName>
        <fullName>Endoplasmic reticulum-to-nucleus signaling 1-like</fullName>
    </alternativeName>
    <alternativeName>
        <fullName>Inositol-requiring protein 1-like</fullName>
    </alternativeName>
</protein>
<comment type="domain">
    <text>The protein kinase domain is predicted to be catalytically inactive. As the kinase activity is required for activation of the endoribonuclease domain, the protein could be inactive.</text>
</comment>
<comment type="similarity">
    <text evidence="2">Belongs to the protein kinase superfamily. Ser/Thr protein kinase family.</text>
</comment>
<keyword id="KW-0067">ATP-binding</keyword>
<keyword id="KW-0547">Nucleotide-binding</keyword>
<keyword id="KW-1185">Reference proteome</keyword>
<keyword id="KW-0732">Signal</keyword>
<feature type="signal peptide" evidence="1">
    <location>
        <begin position="1"/>
        <end position="17"/>
    </location>
</feature>
<feature type="chain" id="PRO_0000422139" description="Inactive serine/threonine-protein kinase/endoribonuclease IRE1-like">
    <location>
        <begin position="18"/>
        <end position="554"/>
    </location>
</feature>
<feature type="domain" description="Protein kinase" evidence="2">
    <location>
        <begin position="121"/>
        <end position="408"/>
    </location>
</feature>
<feature type="domain" description="KEN" evidence="3">
    <location>
        <begin position="411"/>
        <end position="554"/>
    </location>
</feature>
<feature type="region of interest" description="Disordered" evidence="4">
    <location>
        <begin position="36"/>
        <end position="85"/>
    </location>
</feature>
<feature type="compositionally biased region" description="Basic and acidic residues" evidence="4">
    <location>
        <begin position="51"/>
        <end position="63"/>
    </location>
</feature>
<feature type="binding site" evidence="2">
    <location>
        <position position="150"/>
    </location>
    <ligand>
        <name>ATP</name>
        <dbReference type="ChEBI" id="CHEBI:30616"/>
    </ligand>
</feature>
<name>IRE1L_ARATH</name>
<accession>Q9SF12</accession>